<accession>A6X449</accession>
<evidence type="ECO:0000255" key="1">
    <source>
        <dbReference type="HAMAP-Rule" id="MF_01031"/>
    </source>
</evidence>
<protein>
    <recommendedName>
        <fullName evidence="1">3-isopropylmalate dehydratase small subunit</fullName>
        <ecNumber evidence="1">4.2.1.33</ecNumber>
    </recommendedName>
    <alternativeName>
        <fullName evidence="1">Alpha-IPM isomerase</fullName>
        <shortName evidence="1">IPMI</shortName>
    </alternativeName>
    <alternativeName>
        <fullName evidence="1">Isopropylmalate isomerase</fullName>
    </alternativeName>
</protein>
<dbReference type="EC" id="4.2.1.33" evidence="1"/>
<dbReference type="EMBL" id="CP000759">
    <property type="protein sequence ID" value="ABS16003.1"/>
    <property type="molecule type" value="Genomic_DNA"/>
</dbReference>
<dbReference type="RefSeq" id="WP_012092735.1">
    <property type="nucleotide sequence ID" value="NC_009668.1"/>
</dbReference>
<dbReference type="SMR" id="A6X449"/>
<dbReference type="STRING" id="439375.Oant_3297"/>
<dbReference type="KEGG" id="oan:Oant_3297"/>
<dbReference type="PATRIC" id="fig|439375.7.peg.3452"/>
<dbReference type="eggNOG" id="COG0066">
    <property type="taxonomic scope" value="Bacteria"/>
</dbReference>
<dbReference type="HOGENOM" id="CLU_081378_0_3_5"/>
<dbReference type="PhylomeDB" id="A6X449"/>
<dbReference type="UniPathway" id="UPA00048">
    <property type="reaction ID" value="UER00071"/>
</dbReference>
<dbReference type="Proteomes" id="UP000002301">
    <property type="component" value="Chromosome 2"/>
</dbReference>
<dbReference type="GO" id="GO:0009316">
    <property type="term" value="C:3-isopropylmalate dehydratase complex"/>
    <property type="evidence" value="ECO:0007669"/>
    <property type="project" value="InterPro"/>
</dbReference>
<dbReference type="GO" id="GO:0003861">
    <property type="term" value="F:3-isopropylmalate dehydratase activity"/>
    <property type="evidence" value="ECO:0007669"/>
    <property type="project" value="UniProtKB-UniRule"/>
</dbReference>
<dbReference type="GO" id="GO:0009098">
    <property type="term" value="P:L-leucine biosynthetic process"/>
    <property type="evidence" value="ECO:0007669"/>
    <property type="project" value="UniProtKB-UniRule"/>
</dbReference>
<dbReference type="CDD" id="cd01577">
    <property type="entry name" value="IPMI_Swivel"/>
    <property type="match status" value="1"/>
</dbReference>
<dbReference type="FunFam" id="3.20.19.10:FF:000003">
    <property type="entry name" value="3-isopropylmalate dehydratase small subunit"/>
    <property type="match status" value="1"/>
</dbReference>
<dbReference type="Gene3D" id="3.20.19.10">
    <property type="entry name" value="Aconitase, domain 4"/>
    <property type="match status" value="1"/>
</dbReference>
<dbReference type="HAMAP" id="MF_01031">
    <property type="entry name" value="LeuD_type1"/>
    <property type="match status" value="1"/>
</dbReference>
<dbReference type="InterPro" id="IPR004431">
    <property type="entry name" value="3-IsopropMal_deHydase_ssu"/>
</dbReference>
<dbReference type="InterPro" id="IPR015928">
    <property type="entry name" value="Aconitase/3IPM_dehydase_swvl"/>
</dbReference>
<dbReference type="InterPro" id="IPR000573">
    <property type="entry name" value="AconitaseA/IPMdHydase_ssu_swvl"/>
</dbReference>
<dbReference type="InterPro" id="IPR033940">
    <property type="entry name" value="IPMI_Swivel"/>
</dbReference>
<dbReference type="InterPro" id="IPR050075">
    <property type="entry name" value="LeuD"/>
</dbReference>
<dbReference type="NCBIfam" id="TIGR00171">
    <property type="entry name" value="leuD"/>
    <property type="match status" value="1"/>
</dbReference>
<dbReference type="NCBIfam" id="NF002458">
    <property type="entry name" value="PRK01641.1"/>
    <property type="match status" value="1"/>
</dbReference>
<dbReference type="PANTHER" id="PTHR43345:SF5">
    <property type="entry name" value="3-ISOPROPYLMALATE DEHYDRATASE SMALL SUBUNIT"/>
    <property type="match status" value="1"/>
</dbReference>
<dbReference type="PANTHER" id="PTHR43345">
    <property type="entry name" value="3-ISOPROPYLMALATE DEHYDRATASE SMALL SUBUNIT 2-RELATED-RELATED"/>
    <property type="match status" value="1"/>
</dbReference>
<dbReference type="Pfam" id="PF00694">
    <property type="entry name" value="Aconitase_C"/>
    <property type="match status" value="1"/>
</dbReference>
<dbReference type="SUPFAM" id="SSF52016">
    <property type="entry name" value="LeuD/IlvD-like"/>
    <property type="match status" value="1"/>
</dbReference>
<feature type="chain" id="PRO_1000063800" description="3-isopropylmalate dehydratase small subunit">
    <location>
        <begin position="1"/>
        <end position="201"/>
    </location>
</feature>
<reference key="1">
    <citation type="journal article" date="2011" name="J. Bacteriol.">
        <title>Genome of Ochrobactrum anthropi ATCC 49188 T, a versatile opportunistic pathogen and symbiont of several eukaryotic hosts.</title>
        <authorList>
            <person name="Chain P.S."/>
            <person name="Lang D.M."/>
            <person name="Comerci D.J."/>
            <person name="Malfatti S.A."/>
            <person name="Vergez L.M."/>
            <person name="Shin M."/>
            <person name="Ugalde R.A."/>
            <person name="Garcia E."/>
            <person name="Tolmasky M.E."/>
        </authorList>
    </citation>
    <scope>NUCLEOTIDE SEQUENCE [LARGE SCALE GENOMIC DNA]</scope>
    <source>
        <strain>ATCC 49188 / DSM 6882 / CCUG 24695 / JCM 21032 / LMG 3331 / NBRC 15819 / NCTC 12168 / Alc 37</strain>
    </source>
</reference>
<name>LEUD_BRUA4</name>
<sequence>MDKFTKLTGVAAPLPIVNIDTDMIIPKDYLKTIKRTGLSKGLFAEMRFNEDGTENPDFVLNKPGYRNAQILVAGDNFGCGSSREHAPWALLDFGIRCVISTSFADIFYNNCFKNGILPIKVAQEDLDKLMDDASRGANATLTVDLEAKEIHGPDGGSISFDVDDFKRHCLLNGLDDIGLTMEKAGSIDTFEAKRAELRPWA</sequence>
<proteinExistence type="inferred from homology"/>
<keyword id="KW-0028">Amino-acid biosynthesis</keyword>
<keyword id="KW-0100">Branched-chain amino acid biosynthesis</keyword>
<keyword id="KW-0432">Leucine biosynthesis</keyword>
<keyword id="KW-0456">Lyase</keyword>
<keyword id="KW-1185">Reference proteome</keyword>
<gene>
    <name evidence="1" type="primary">leuD</name>
    <name type="ordered locus">Oant_3297</name>
</gene>
<comment type="function">
    <text evidence="1">Catalyzes the isomerization between 2-isopropylmalate and 3-isopropylmalate, via the formation of 2-isopropylmaleate.</text>
</comment>
<comment type="catalytic activity">
    <reaction evidence="1">
        <text>(2R,3S)-3-isopropylmalate = (2S)-2-isopropylmalate</text>
        <dbReference type="Rhea" id="RHEA:32287"/>
        <dbReference type="ChEBI" id="CHEBI:1178"/>
        <dbReference type="ChEBI" id="CHEBI:35121"/>
        <dbReference type="EC" id="4.2.1.33"/>
    </reaction>
</comment>
<comment type="pathway">
    <text evidence="1">Amino-acid biosynthesis; L-leucine biosynthesis; L-leucine from 3-methyl-2-oxobutanoate: step 2/4.</text>
</comment>
<comment type="subunit">
    <text evidence="1">Heterodimer of LeuC and LeuD.</text>
</comment>
<comment type="similarity">
    <text evidence="1">Belongs to the LeuD family. LeuD type 1 subfamily.</text>
</comment>
<organism>
    <name type="scientific">Brucella anthropi (strain ATCC 49188 / DSM 6882 / CCUG 24695 / JCM 21032 / LMG 3331 / NBRC 15819 / NCTC 12168 / Alc 37)</name>
    <name type="common">Ochrobactrum anthropi</name>
    <dbReference type="NCBI Taxonomy" id="439375"/>
    <lineage>
        <taxon>Bacteria</taxon>
        <taxon>Pseudomonadati</taxon>
        <taxon>Pseudomonadota</taxon>
        <taxon>Alphaproteobacteria</taxon>
        <taxon>Hyphomicrobiales</taxon>
        <taxon>Brucellaceae</taxon>
        <taxon>Brucella/Ochrobactrum group</taxon>
        <taxon>Brucella</taxon>
    </lineage>
</organism>